<keyword id="KW-0149">Chlorophyll biosynthesis</keyword>
<keyword id="KW-0521">NADP</keyword>
<keyword id="KW-0560">Oxidoreductase</keyword>
<keyword id="KW-0627">Porphyrin biosynthesis</keyword>
<keyword id="KW-1185">Reference proteome</keyword>
<feature type="chain" id="PRO_1000004667" description="Glutamyl-tRNA reductase">
    <location>
        <begin position="1"/>
        <end position="441"/>
    </location>
</feature>
<feature type="active site" description="Nucleophile" evidence="1">
    <location>
        <position position="50"/>
    </location>
</feature>
<feature type="binding site" evidence="1">
    <location>
        <begin position="49"/>
        <end position="52"/>
    </location>
    <ligand>
        <name>substrate</name>
    </ligand>
</feature>
<feature type="binding site" evidence="1">
    <location>
        <position position="109"/>
    </location>
    <ligand>
        <name>substrate</name>
    </ligand>
</feature>
<feature type="binding site" evidence="1">
    <location>
        <begin position="114"/>
        <end position="116"/>
    </location>
    <ligand>
        <name>substrate</name>
    </ligand>
</feature>
<feature type="binding site" evidence="1">
    <location>
        <position position="120"/>
    </location>
    <ligand>
        <name>substrate</name>
    </ligand>
</feature>
<feature type="binding site" evidence="1">
    <location>
        <begin position="198"/>
        <end position="203"/>
    </location>
    <ligand>
        <name>NADP(+)</name>
        <dbReference type="ChEBI" id="CHEBI:58349"/>
    </ligand>
</feature>
<feature type="site" description="Important for activity" evidence="1">
    <location>
        <position position="99"/>
    </location>
</feature>
<evidence type="ECO:0000255" key="1">
    <source>
        <dbReference type="HAMAP-Rule" id="MF_00087"/>
    </source>
</evidence>
<comment type="function">
    <text evidence="1">Catalyzes the NADPH-dependent reduction of glutamyl-tRNA(Glu) to glutamate 1-semialdehyde (GSA).</text>
</comment>
<comment type="catalytic activity">
    <reaction evidence="1">
        <text>(S)-4-amino-5-oxopentanoate + tRNA(Glu) + NADP(+) = L-glutamyl-tRNA(Glu) + NADPH + H(+)</text>
        <dbReference type="Rhea" id="RHEA:12344"/>
        <dbReference type="Rhea" id="RHEA-COMP:9663"/>
        <dbReference type="Rhea" id="RHEA-COMP:9680"/>
        <dbReference type="ChEBI" id="CHEBI:15378"/>
        <dbReference type="ChEBI" id="CHEBI:57501"/>
        <dbReference type="ChEBI" id="CHEBI:57783"/>
        <dbReference type="ChEBI" id="CHEBI:58349"/>
        <dbReference type="ChEBI" id="CHEBI:78442"/>
        <dbReference type="ChEBI" id="CHEBI:78520"/>
        <dbReference type="EC" id="1.2.1.70"/>
    </reaction>
</comment>
<comment type="pathway">
    <text evidence="1">Porphyrin-containing compound metabolism; protoporphyrin-IX biosynthesis; 5-aminolevulinate from L-glutamyl-tRNA(Glu): step 1/2.</text>
</comment>
<comment type="pathway">
    <text evidence="1">Porphyrin-containing compound metabolism; chlorophyll biosynthesis.</text>
</comment>
<comment type="subunit">
    <text evidence="1">Homodimer.</text>
</comment>
<comment type="domain">
    <text evidence="1">Possesses an unusual extended V-shaped dimeric structure with each monomer consisting of three distinct domains arranged along a curved 'spinal' alpha-helix. The N-terminal catalytic domain specifically recognizes the glutamate moiety of the substrate. The second domain is the NADPH-binding domain, and the third C-terminal domain is responsible for dimerization.</text>
</comment>
<comment type="miscellaneous">
    <text evidence="1">During catalysis, the active site Cys acts as a nucleophile attacking the alpha-carbonyl group of tRNA-bound glutamate with the formation of a thioester intermediate between enzyme and glutamate, and the concomitant release of tRNA(Glu). The thioester intermediate is finally reduced by direct hydride transfer from NADPH, to form the product GSA.</text>
</comment>
<comment type="similarity">
    <text evidence="1">Belongs to the glutamyl-tRNA reductase family.</text>
</comment>
<sequence>MHIAVVGLSHRTAPVEVREKLSIPEELVEKSFNNLKKIDQILEVSILSTCNRLEIYSLVKDPQLGIEAIKSFLLQFSGLDDEILSPHLFNYVQEKAVSHVMRVSAGLDSLVLGEGQILSQVKKMVRLGQDHHSLGPILNRLLTQAVSTGKRVRSETNLGTGAVSISSAAVELAQLKLGQAHGRDQLMTLETEKVAVVGAGRMSRLLLQHLQSKGCCSLTLLNRTKKRAEDLSAAFPDIQIDCQLIDELDSCLSLSTLVFTSTAANEPIIDAEKLIKIDRKPLLRLIDIGVPRNISSDAKSVSGIESHDVDDLQEVVSRNQEARQKLALEAEGLIEEECRVFLEWWDSLAAVPTINCLRSGLESIRKEELQKALSRMGPDFSARERKVVEALSKGIINKILHTPVTKLRAPQSRNDRRDSLDVIEKLFNLDVSSSLNKPKNN</sequence>
<accession>Q46LG2</accession>
<reference key="1">
    <citation type="journal article" date="2007" name="PLoS Genet.">
        <title>Patterns and implications of gene gain and loss in the evolution of Prochlorococcus.</title>
        <authorList>
            <person name="Kettler G.C."/>
            <person name="Martiny A.C."/>
            <person name="Huang K."/>
            <person name="Zucker J."/>
            <person name="Coleman M.L."/>
            <person name="Rodrigue S."/>
            <person name="Chen F."/>
            <person name="Lapidus A."/>
            <person name="Ferriera S."/>
            <person name="Johnson J."/>
            <person name="Steglich C."/>
            <person name="Church G.M."/>
            <person name="Richardson P."/>
            <person name="Chisholm S.W."/>
        </authorList>
    </citation>
    <scope>NUCLEOTIDE SEQUENCE [LARGE SCALE GENOMIC DNA]</scope>
    <source>
        <strain>NATL2A</strain>
    </source>
</reference>
<name>HEM1_PROMT</name>
<dbReference type="EC" id="1.2.1.70" evidence="1"/>
<dbReference type="EMBL" id="CP000095">
    <property type="protein sequence ID" value="AAZ57666.1"/>
    <property type="molecule type" value="Genomic_DNA"/>
</dbReference>
<dbReference type="RefSeq" id="WP_011293708.1">
    <property type="nucleotide sequence ID" value="NC_007335.2"/>
</dbReference>
<dbReference type="SMR" id="Q46LG2"/>
<dbReference type="STRING" id="59920.PMN2A_0174"/>
<dbReference type="KEGG" id="pmn:PMN2A_0174"/>
<dbReference type="HOGENOM" id="CLU_035113_2_1_3"/>
<dbReference type="OrthoDB" id="110209at2"/>
<dbReference type="PhylomeDB" id="Q46LG2"/>
<dbReference type="UniPathway" id="UPA00251">
    <property type="reaction ID" value="UER00316"/>
</dbReference>
<dbReference type="UniPathway" id="UPA00668"/>
<dbReference type="Proteomes" id="UP000002535">
    <property type="component" value="Chromosome"/>
</dbReference>
<dbReference type="GO" id="GO:0008883">
    <property type="term" value="F:glutamyl-tRNA reductase activity"/>
    <property type="evidence" value="ECO:0007669"/>
    <property type="project" value="UniProtKB-UniRule"/>
</dbReference>
<dbReference type="GO" id="GO:0050661">
    <property type="term" value="F:NADP binding"/>
    <property type="evidence" value="ECO:0007669"/>
    <property type="project" value="InterPro"/>
</dbReference>
<dbReference type="GO" id="GO:0015995">
    <property type="term" value="P:chlorophyll biosynthetic process"/>
    <property type="evidence" value="ECO:0007669"/>
    <property type="project" value="UniProtKB-UniRule"/>
</dbReference>
<dbReference type="GO" id="GO:0006782">
    <property type="term" value="P:protoporphyrinogen IX biosynthetic process"/>
    <property type="evidence" value="ECO:0007669"/>
    <property type="project" value="UniProtKB-UniRule"/>
</dbReference>
<dbReference type="CDD" id="cd05213">
    <property type="entry name" value="NAD_bind_Glutamyl_tRNA_reduct"/>
    <property type="match status" value="1"/>
</dbReference>
<dbReference type="FunFam" id="3.30.460.30:FF:000001">
    <property type="entry name" value="Glutamyl-tRNA reductase"/>
    <property type="match status" value="1"/>
</dbReference>
<dbReference type="Gene3D" id="3.30.460.30">
    <property type="entry name" value="Glutamyl-tRNA reductase, N-terminal domain"/>
    <property type="match status" value="1"/>
</dbReference>
<dbReference type="Gene3D" id="3.40.50.720">
    <property type="entry name" value="NAD(P)-binding Rossmann-like Domain"/>
    <property type="match status" value="1"/>
</dbReference>
<dbReference type="HAMAP" id="MF_00087">
    <property type="entry name" value="Glu_tRNA_reductase"/>
    <property type="match status" value="1"/>
</dbReference>
<dbReference type="InterPro" id="IPR000343">
    <property type="entry name" value="4pyrrol_synth_GluRdtase"/>
</dbReference>
<dbReference type="InterPro" id="IPR015896">
    <property type="entry name" value="4pyrrol_synth_GluRdtase_dimer"/>
</dbReference>
<dbReference type="InterPro" id="IPR015895">
    <property type="entry name" value="4pyrrol_synth_GluRdtase_N"/>
</dbReference>
<dbReference type="InterPro" id="IPR018214">
    <property type="entry name" value="GluRdtase_CS"/>
</dbReference>
<dbReference type="InterPro" id="IPR036453">
    <property type="entry name" value="GluRdtase_dimer_dom_sf"/>
</dbReference>
<dbReference type="InterPro" id="IPR036343">
    <property type="entry name" value="GluRdtase_N_sf"/>
</dbReference>
<dbReference type="InterPro" id="IPR036291">
    <property type="entry name" value="NAD(P)-bd_dom_sf"/>
</dbReference>
<dbReference type="InterPro" id="IPR006151">
    <property type="entry name" value="Shikm_DH/Glu-tRNA_Rdtase"/>
</dbReference>
<dbReference type="NCBIfam" id="TIGR01035">
    <property type="entry name" value="hemA"/>
    <property type="match status" value="1"/>
</dbReference>
<dbReference type="NCBIfam" id="NF000744">
    <property type="entry name" value="PRK00045.1-3"/>
    <property type="match status" value="1"/>
</dbReference>
<dbReference type="PANTHER" id="PTHR43120">
    <property type="entry name" value="GLUTAMYL-TRNA REDUCTASE 1, CHLOROPLASTIC"/>
    <property type="match status" value="1"/>
</dbReference>
<dbReference type="PANTHER" id="PTHR43120:SF1">
    <property type="entry name" value="GLUTAMYL-TRNA REDUCTASE 1, CHLOROPLASTIC"/>
    <property type="match status" value="1"/>
</dbReference>
<dbReference type="Pfam" id="PF00745">
    <property type="entry name" value="GlutR_dimer"/>
    <property type="match status" value="1"/>
</dbReference>
<dbReference type="Pfam" id="PF05201">
    <property type="entry name" value="GlutR_N"/>
    <property type="match status" value="1"/>
</dbReference>
<dbReference type="Pfam" id="PF01488">
    <property type="entry name" value="Shikimate_DH"/>
    <property type="match status" value="1"/>
</dbReference>
<dbReference type="PIRSF" id="PIRSF000445">
    <property type="entry name" value="4pyrrol_synth_GluRdtase"/>
    <property type="match status" value="1"/>
</dbReference>
<dbReference type="SUPFAM" id="SSF69742">
    <property type="entry name" value="Glutamyl tRNA-reductase catalytic, N-terminal domain"/>
    <property type="match status" value="1"/>
</dbReference>
<dbReference type="SUPFAM" id="SSF69075">
    <property type="entry name" value="Glutamyl tRNA-reductase dimerization domain"/>
    <property type="match status" value="1"/>
</dbReference>
<dbReference type="SUPFAM" id="SSF51735">
    <property type="entry name" value="NAD(P)-binding Rossmann-fold domains"/>
    <property type="match status" value="1"/>
</dbReference>
<dbReference type="PROSITE" id="PS00747">
    <property type="entry name" value="GLUTR"/>
    <property type="match status" value="1"/>
</dbReference>
<organism>
    <name type="scientific">Prochlorococcus marinus (strain NATL2A)</name>
    <dbReference type="NCBI Taxonomy" id="59920"/>
    <lineage>
        <taxon>Bacteria</taxon>
        <taxon>Bacillati</taxon>
        <taxon>Cyanobacteriota</taxon>
        <taxon>Cyanophyceae</taxon>
        <taxon>Synechococcales</taxon>
        <taxon>Prochlorococcaceae</taxon>
        <taxon>Prochlorococcus</taxon>
    </lineage>
</organism>
<proteinExistence type="inferred from homology"/>
<protein>
    <recommendedName>
        <fullName evidence="1">Glutamyl-tRNA reductase</fullName>
        <shortName evidence="1">GluTR</shortName>
        <ecNumber evidence="1">1.2.1.70</ecNumber>
    </recommendedName>
</protein>
<gene>
    <name evidence="1" type="primary">hemA</name>
    <name type="ordered locus">PMN2A_0174</name>
</gene>